<proteinExistence type="inferred from homology"/>
<accession>Q1C0K9</accession>
<keyword id="KW-0028">Amino-acid biosynthesis</keyword>
<keyword id="KW-0067">ATP-binding</keyword>
<keyword id="KW-0963">Cytoplasm</keyword>
<keyword id="KW-0418">Kinase</keyword>
<keyword id="KW-0547">Nucleotide-binding</keyword>
<keyword id="KW-0791">Threonine biosynthesis</keyword>
<keyword id="KW-0808">Transferase</keyword>
<organism>
    <name type="scientific">Yersinia pestis bv. Antiqua (strain Antiqua)</name>
    <dbReference type="NCBI Taxonomy" id="360102"/>
    <lineage>
        <taxon>Bacteria</taxon>
        <taxon>Pseudomonadati</taxon>
        <taxon>Pseudomonadota</taxon>
        <taxon>Gammaproteobacteria</taxon>
        <taxon>Enterobacterales</taxon>
        <taxon>Yersiniaceae</taxon>
        <taxon>Yersinia</taxon>
    </lineage>
</organism>
<protein>
    <recommendedName>
        <fullName evidence="1">Homoserine kinase</fullName>
        <shortName evidence="1">HK</shortName>
        <shortName evidence="1">HSK</shortName>
        <ecNumber evidence="1">2.7.1.39</ecNumber>
    </recommendedName>
</protein>
<dbReference type="EC" id="2.7.1.39" evidence="1"/>
<dbReference type="EMBL" id="CP000308">
    <property type="protein sequence ID" value="ABG16013.1"/>
    <property type="molecule type" value="Genomic_DNA"/>
</dbReference>
<dbReference type="RefSeq" id="WP_002209238.1">
    <property type="nucleotide sequence ID" value="NZ_CP009906.1"/>
</dbReference>
<dbReference type="SMR" id="Q1C0K9"/>
<dbReference type="GeneID" id="96664104"/>
<dbReference type="KEGG" id="ypa:YPA_4052"/>
<dbReference type="UniPathway" id="UPA00050">
    <property type="reaction ID" value="UER00064"/>
</dbReference>
<dbReference type="Proteomes" id="UP000001971">
    <property type="component" value="Chromosome"/>
</dbReference>
<dbReference type="GO" id="GO:0005737">
    <property type="term" value="C:cytoplasm"/>
    <property type="evidence" value="ECO:0007669"/>
    <property type="project" value="UniProtKB-SubCell"/>
</dbReference>
<dbReference type="GO" id="GO:0005524">
    <property type="term" value="F:ATP binding"/>
    <property type="evidence" value="ECO:0007669"/>
    <property type="project" value="UniProtKB-UniRule"/>
</dbReference>
<dbReference type="GO" id="GO:0004413">
    <property type="term" value="F:homoserine kinase activity"/>
    <property type="evidence" value="ECO:0007669"/>
    <property type="project" value="UniProtKB-UniRule"/>
</dbReference>
<dbReference type="GO" id="GO:0009088">
    <property type="term" value="P:threonine biosynthetic process"/>
    <property type="evidence" value="ECO:0007669"/>
    <property type="project" value="UniProtKB-UniRule"/>
</dbReference>
<dbReference type="FunFam" id="3.30.230.10:FF:000020">
    <property type="entry name" value="Homoserine kinase"/>
    <property type="match status" value="1"/>
</dbReference>
<dbReference type="FunFam" id="3.30.70.890:FF:000002">
    <property type="entry name" value="Homoserine kinase"/>
    <property type="match status" value="1"/>
</dbReference>
<dbReference type="Gene3D" id="3.30.230.10">
    <property type="match status" value="1"/>
</dbReference>
<dbReference type="Gene3D" id="3.30.70.890">
    <property type="entry name" value="GHMP kinase, C-terminal domain"/>
    <property type="match status" value="1"/>
</dbReference>
<dbReference type="HAMAP" id="MF_00384">
    <property type="entry name" value="Homoser_kinase"/>
    <property type="match status" value="1"/>
</dbReference>
<dbReference type="InterPro" id="IPR013750">
    <property type="entry name" value="GHMP_kinase_C_dom"/>
</dbReference>
<dbReference type="InterPro" id="IPR036554">
    <property type="entry name" value="GHMP_kinase_C_sf"/>
</dbReference>
<dbReference type="InterPro" id="IPR006204">
    <property type="entry name" value="GHMP_kinase_N_dom"/>
</dbReference>
<dbReference type="InterPro" id="IPR006203">
    <property type="entry name" value="GHMP_knse_ATP-bd_CS"/>
</dbReference>
<dbReference type="InterPro" id="IPR000870">
    <property type="entry name" value="Homoserine_kinase"/>
</dbReference>
<dbReference type="InterPro" id="IPR020568">
    <property type="entry name" value="Ribosomal_Su5_D2-typ_SF"/>
</dbReference>
<dbReference type="InterPro" id="IPR014721">
    <property type="entry name" value="Ribsml_uS5_D2-typ_fold_subgr"/>
</dbReference>
<dbReference type="NCBIfam" id="NF002288">
    <property type="entry name" value="PRK01212.1-4"/>
    <property type="match status" value="1"/>
</dbReference>
<dbReference type="NCBIfam" id="TIGR00191">
    <property type="entry name" value="thrB"/>
    <property type="match status" value="1"/>
</dbReference>
<dbReference type="PANTHER" id="PTHR20861:SF1">
    <property type="entry name" value="HOMOSERINE KINASE"/>
    <property type="match status" value="1"/>
</dbReference>
<dbReference type="PANTHER" id="PTHR20861">
    <property type="entry name" value="HOMOSERINE/4-DIPHOSPHOCYTIDYL-2-C-METHYL-D-ERYTHRITOL KINASE"/>
    <property type="match status" value="1"/>
</dbReference>
<dbReference type="Pfam" id="PF08544">
    <property type="entry name" value="GHMP_kinases_C"/>
    <property type="match status" value="1"/>
</dbReference>
<dbReference type="Pfam" id="PF00288">
    <property type="entry name" value="GHMP_kinases_N"/>
    <property type="match status" value="1"/>
</dbReference>
<dbReference type="PIRSF" id="PIRSF000676">
    <property type="entry name" value="Homoser_kin"/>
    <property type="match status" value="1"/>
</dbReference>
<dbReference type="PRINTS" id="PR00958">
    <property type="entry name" value="HOMSERKINASE"/>
</dbReference>
<dbReference type="SUPFAM" id="SSF55060">
    <property type="entry name" value="GHMP Kinase, C-terminal domain"/>
    <property type="match status" value="1"/>
</dbReference>
<dbReference type="SUPFAM" id="SSF54211">
    <property type="entry name" value="Ribosomal protein S5 domain 2-like"/>
    <property type="match status" value="1"/>
</dbReference>
<dbReference type="PROSITE" id="PS00627">
    <property type="entry name" value="GHMP_KINASES_ATP"/>
    <property type="match status" value="1"/>
</dbReference>
<reference key="1">
    <citation type="journal article" date="2006" name="J. Bacteriol.">
        <title>Complete genome sequence of Yersinia pestis strains Antiqua and Nepal516: evidence of gene reduction in an emerging pathogen.</title>
        <authorList>
            <person name="Chain P.S.G."/>
            <person name="Hu P."/>
            <person name="Malfatti S.A."/>
            <person name="Radnedge L."/>
            <person name="Larimer F."/>
            <person name="Vergez L.M."/>
            <person name="Worsham P."/>
            <person name="Chu M.C."/>
            <person name="Andersen G.L."/>
        </authorList>
    </citation>
    <scope>NUCLEOTIDE SEQUENCE [LARGE SCALE GENOMIC DNA]</scope>
    <source>
        <strain>Antiqua</strain>
    </source>
</reference>
<feature type="chain" id="PRO_1000049197" description="Homoserine kinase">
    <location>
        <begin position="1"/>
        <end position="309"/>
    </location>
</feature>
<feature type="binding site" evidence="1">
    <location>
        <begin position="91"/>
        <end position="101"/>
    </location>
    <ligand>
        <name>ATP</name>
        <dbReference type="ChEBI" id="CHEBI:30616"/>
    </ligand>
</feature>
<sequence>MVKIYAPASIGNVSVGFDVLGAAVSPIDGTLLGDCVSVTAAERFSLHNEGRFVSKLPDDPKQNIVYQCWERFCQEMGKEIPVAMVLEKNMPIGSGLGSSACSVVAGLMAMNEFCGQPLDKVTLLGMMGELEGRVSGSIHFDNVAPCYLGGMQLILEQEGYISQDVPGFSDWLWVMAYPGIKVSTAEARAILPAQYRRQDCITHGRNLAGFIHACHTQQPDLAAKMMKDVIAEPYRTQLLPGFAAARQAAQDIGALACGISGSGPTLFAVCNDQATAQRMAGWLQNHYLQNDEGFVHICRLDTAGARLLG</sequence>
<name>KHSE_YERPA</name>
<comment type="function">
    <text evidence="1">Catalyzes the ATP-dependent phosphorylation of L-homoserine to L-homoserine phosphate.</text>
</comment>
<comment type="catalytic activity">
    <reaction evidence="1">
        <text>L-homoserine + ATP = O-phospho-L-homoserine + ADP + H(+)</text>
        <dbReference type="Rhea" id="RHEA:13985"/>
        <dbReference type="ChEBI" id="CHEBI:15378"/>
        <dbReference type="ChEBI" id="CHEBI:30616"/>
        <dbReference type="ChEBI" id="CHEBI:57476"/>
        <dbReference type="ChEBI" id="CHEBI:57590"/>
        <dbReference type="ChEBI" id="CHEBI:456216"/>
        <dbReference type="EC" id="2.7.1.39"/>
    </reaction>
</comment>
<comment type="pathway">
    <text evidence="1">Amino-acid biosynthesis; L-threonine biosynthesis; L-threonine from L-aspartate: step 4/5.</text>
</comment>
<comment type="subcellular location">
    <subcellularLocation>
        <location evidence="1">Cytoplasm</location>
    </subcellularLocation>
</comment>
<comment type="similarity">
    <text evidence="1">Belongs to the GHMP kinase family. Homoserine kinase subfamily.</text>
</comment>
<evidence type="ECO:0000255" key="1">
    <source>
        <dbReference type="HAMAP-Rule" id="MF_00384"/>
    </source>
</evidence>
<gene>
    <name evidence="1" type="primary">thrB</name>
    <name type="ordered locus">YPA_4052</name>
</gene>